<dbReference type="EMBL" id="AF073298">
    <property type="protein sequence ID" value="AAC63516.1"/>
    <property type="molecule type" value="mRNA"/>
</dbReference>
<dbReference type="EMBL" id="AF320073">
    <property type="protein sequence ID" value="AAK07636.1"/>
    <property type="status" value="ALT_SEQ"/>
    <property type="molecule type" value="mRNA"/>
</dbReference>
<dbReference type="EMBL" id="AC018512">
    <property type="status" value="NOT_ANNOTATED_CDS"/>
    <property type="molecule type" value="Genomic_DNA"/>
</dbReference>
<dbReference type="EMBL" id="BC009869">
    <property type="status" value="NOT_ANNOTATED_CDS"/>
    <property type="molecule type" value="mRNA"/>
</dbReference>
<dbReference type="EMBL" id="BC015491">
    <property type="protein sequence ID" value="AAH15491.2"/>
    <property type="molecule type" value="mRNA"/>
</dbReference>
<dbReference type="CCDS" id="CCDS32218.1">
    <molecule id="P84101-1"/>
</dbReference>
<dbReference type="CCDS" id="CCDS55963.1">
    <molecule id="P84101-2"/>
</dbReference>
<dbReference type="CCDS" id="CCDS55964.1">
    <molecule id="P84101-3"/>
</dbReference>
<dbReference type="CCDS" id="CCDS55965.1">
    <molecule id="P84101-4"/>
</dbReference>
<dbReference type="RefSeq" id="NP_001018118.1">
    <molecule id="P84101-1"/>
    <property type="nucleotide sequence ID" value="NM_001018108.4"/>
</dbReference>
<dbReference type="RefSeq" id="NP_001186804.1">
    <molecule id="P84101-2"/>
    <property type="nucleotide sequence ID" value="NM_001199875.1"/>
</dbReference>
<dbReference type="RefSeq" id="NP_001186805.1">
    <molecule id="P84101-3"/>
    <property type="nucleotide sequence ID" value="NM_001199876.1"/>
</dbReference>
<dbReference type="RefSeq" id="NP_001186806.1">
    <molecule id="P84101-1"/>
    <property type="nucleotide sequence ID" value="NM_001199877.2"/>
</dbReference>
<dbReference type="RefSeq" id="NP_001186807.1">
    <molecule id="P84101-4"/>
    <property type="nucleotide sequence ID" value="NM_001199878.2"/>
</dbReference>
<dbReference type="BioGRID" id="115471">
    <property type="interactions" value="89"/>
</dbReference>
<dbReference type="FunCoup" id="P84101">
    <property type="interactions" value="2059"/>
</dbReference>
<dbReference type="IntAct" id="P84101">
    <property type="interactions" value="73"/>
</dbReference>
<dbReference type="STRING" id="9606.ENSP00000387187"/>
<dbReference type="iPTMnet" id="P84101"/>
<dbReference type="MetOSite" id="P84101"/>
<dbReference type="PhosphoSitePlus" id="P84101"/>
<dbReference type="BioMuta" id="SERF2"/>
<dbReference type="DMDM" id="51338670"/>
<dbReference type="jPOST" id="P84101"/>
<dbReference type="MassIVE" id="P84101"/>
<dbReference type="PaxDb" id="9606-ENSP00000387187"/>
<dbReference type="PeptideAtlas" id="P84101"/>
<dbReference type="ProteomicsDB" id="1448"/>
<dbReference type="ProteomicsDB" id="57752">
    <molecule id="P84101-1"/>
</dbReference>
<dbReference type="ProteomicsDB" id="6045"/>
<dbReference type="ProteomicsDB" id="7486"/>
<dbReference type="Pumba" id="P84101"/>
<dbReference type="TopDownProteomics" id="P84101-1">
    <molecule id="P84101-1"/>
</dbReference>
<dbReference type="Antibodypedia" id="34934">
    <property type="antibodies" value="77 antibodies from 17 providers"/>
</dbReference>
<dbReference type="DNASU" id="10169"/>
<dbReference type="Ensembl" id="ENST00000249786.9">
    <molecule id="P84101-1"/>
    <property type="protein sequence ID" value="ENSP00000249786.4"/>
    <property type="gene ID" value="ENSG00000140264.22"/>
</dbReference>
<dbReference type="Ensembl" id="ENST00000339624.9">
    <molecule id="P84101-3"/>
    <property type="protein sequence ID" value="ENSP00000339647.5"/>
    <property type="gene ID" value="ENSG00000140264.22"/>
</dbReference>
<dbReference type="Ensembl" id="ENST00000381359.5">
    <molecule id="P84101-1"/>
    <property type="protein sequence ID" value="ENSP00000370764.1"/>
    <property type="gene ID" value="ENSG00000140264.22"/>
</dbReference>
<dbReference type="Ensembl" id="ENST00000402131.5">
    <molecule id="P84101-4"/>
    <property type="protein sequence ID" value="ENSP00000386044.1"/>
    <property type="gene ID" value="ENSG00000140264.22"/>
</dbReference>
<dbReference type="Ensembl" id="ENST00000403425.5">
    <molecule id="P84101-4"/>
    <property type="protein sequence ID" value="ENSP00000384300.1"/>
    <property type="gene ID" value="ENSG00000140264.22"/>
</dbReference>
<dbReference type="Ensembl" id="ENST00000409614.1">
    <molecule id="P84101-4"/>
    <property type="protein sequence ID" value="ENSP00000386783.1"/>
    <property type="gene ID" value="ENSG00000140264.22"/>
</dbReference>
<dbReference type="Ensembl" id="ENST00000409960.6">
    <molecule id="P84101-2"/>
    <property type="protein sequence ID" value="ENSP00000387187.2"/>
    <property type="gene ID" value="ENSG00000140264.22"/>
</dbReference>
<dbReference type="Ensembl" id="ENST00000445816.5">
    <molecule id="P84101-1"/>
    <property type="protein sequence ID" value="ENSP00000400178.1"/>
    <property type="gene ID" value="ENSG00000140264.22"/>
</dbReference>
<dbReference type="GeneID" id="10169"/>
<dbReference type="KEGG" id="hsa:10169"/>
<dbReference type="MANE-Select" id="ENST00000249786.9">
    <property type="protein sequence ID" value="ENSP00000249786.4"/>
    <property type="RefSeq nucleotide sequence ID" value="NM_001018108.4"/>
    <property type="RefSeq protein sequence ID" value="NP_001018118.1"/>
</dbReference>
<dbReference type="UCSC" id="uc001zsz.5">
    <molecule id="P84101-1"/>
    <property type="organism name" value="human"/>
</dbReference>
<dbReference type="AGR" id="HGNC:10757"/>
<dbReference type="CTD" id="10169"/>
<dbReference type="DisGeNET" id="10169"/>
<dbReference type="GeneCards" id="SERF2"/>
<dbReference type="HGNC" id="HGNC:10757">
    <property type="gene designation" value="SERF2"/>
</dbReference>
<dbReference type="HPA" id="ENSG00000140264">
    <property type="expression patterns" value="Low tissue specificity"/>
</dbReference>
<dbReference type="MIM" id="605054">
    <property type="type" value="gene"/>
</dbReference>
<dbReference type="neXtProt" id="NX_P84101"/>
<dbReference type="PharmGKB" id="PA35677"/>
<dbReference type="VEuPathDB" id="HostDB:ENSG00000140264"/>
<dbReference type="eggNOG" id="KOG4488">
    <property type="taxonomic scope" value="Eukaryota"/>
</dbReference>
<dbReference type="GeneTree" id="ENSGT00940000164082"/>
<dbReference type="HOGENOM" id="CLU_165034_1_1_1"/>
<dbReference type="InParanoid" id="P84101"/>
<dbReference type="OMA" id="HAKKQTE"/>
<dbReference type="OrthoDB" id="18018at2759"/>
<dbReference type="PAN-GO" id="P84101">
    <property type="GO annotations" value="0 GO annotations based on evolutionary models"/>
</dbReference>
<dbReference type="PhylomeDB" id="P84101"/>
<dbReference type="PathwayCommons" id="P84101"/>
<dbReference type="SignaLink" id="P84101"/>
<dbReference type="BioGRID-ORCS" id="10169">
    <property type="hits" value="83 hits in 1159 CRISPR screens"/>
</dbReference>
<dbReference type="CD-CODE" id="91857CE7">
    <property type="entry name" value="Nucleolus"/>
</dbReference>
<dbReference type="ChiTaRS" id="SERF2">
    <property type="organism name" value="human"/>
</dbReference>
<dbReference type="GeneWiki" id="SERF2"/>
<dbReference type="GenomeRNAi" id="10169"/>
<dbReference type="Pharos" id="P84101">
    <property type="development level" value="Tdark"/>
</dbReference>
<dbReference type="PRO" id="PR:P84101"/>
<dbReference type="Proteomes" id="UP000005640">
    <property type="component" value="Chromosome 15"/>
</dbReference>
<dbReference type="RNAct" id="P84101">
    <property type="molecule type" value="protein"/>
</dbReference>
<dbReference type="Bgee" id="ENSG00000140264">
    <property type="expression patterns" value="Expressed in mucosa of transverse colon and 98 other cell types or tissues"/>
</dbReference>
<dbReference type="ExpressionAtlas" id="P84101">
    <property type="expression patterns" value="baseline and differential"/>
</dbReference>
<dbReference type="GO" id="GO:0005829">
    <property type="term" value="C:cytosol"/>
    <property type="evidence" value="ECO:0000250"/>
    <property type="project" value="UniProtKB"/>
</dbReference>
<dbReference type="GO" id="GO:0005634">
    <property type="term" value="C:nucleus"/>
    <property type="evidence" value="ECO:0000250"/>
    <property type="project" value="UniProtKB"/>
</dbReference>
<dbReference type="GO" id="GO:0031648">
    <property type="term" value="P:protein destabilization"/>
    <property type="evidence" value="ECO:0000315"/>
    <property type="project" value="UniProtKB"/>
</dbReference>
<dbReference type="InterPro" id="IPR007513">
    <property type="entry name" value="SERF-like_N"/>
</dbReference>
<dbReference type="InterPro" id="IPR040211">
    <property type="entry name" value="SERF1/2-like"/>
</dbReference>
<dbReference type="PANTHER" id="PTHR13596">
    <property type="entry name" value="SMALL EDRK-RICH FACTOR 1"/>
    <property type="match status" value="1"/>
</dbReference>
<dbReference type="PANTHER" id="PTHR13596:SF2">
    <property type="entry name" value="SMALL EDRK-RICH FACTOR 2"/>
    <property type="match status" value="1"/>
</dbReference>
<dbReference type="Pfam" id="PF04419">
    <property type="entry name" value="SERF-like_N"/>
    <property type="match status" value="1"/>
</dbReference>
<name>SERF2_HUMAN</name>
<organism>
    <name type="scientific">Homo sapiens</name>
    <name type="common">Human</name>
    <dbReference type="NCBI Taxonomy" id="9606"/>
    <lineage>
        <taxon>Eukaryota</taxon>
        <taxon>Metazoa</taxon>
        <taxon>Chordata</taxon>
        <taxon>Craniata</taxon>
        <taxon>Vertebrata</taxon>
        <taxon>Euteleostomi</taxon>
        <taxon>Mammalia</taxon>
        <taxon>Eutheria</taxon>
        <taxon>Euarchontoglires</taxon>
        <taxon>Primates</taxon>
        <taxon>Haplorrhini</taxon>
        <taxon>Catarrhini</taxon>
        <taxon>Hominidae</taxon>
        <taxon>Homo</taxon>
    </lineage>
</organism>
<accession>P84101</accession>
<accession>A6NL45</accession>
<accession>B5MCG1</accession>
<accession>B9A026</accession>
<accession>O75918</accession>
<accession>O88891</accession>
<accession>Q9BZH7</accession>
<gene>
    <name type="primary">SERF2</name>
    <name type="synonym">FAM2C</name>
</gene>
<comment type="function">
    <text evidence="2">Positive regulator of amyloid protein aggregation and proteotoxicity (PubMed:20723760). Induces conformational changes in amyloid proteins, such as HTT, driving them into compact formations preceding the formation of aggregates (PubMed:20723760).</text>
</comment>
<comment type="alternative products">
    <event type="alternative splicing"/>
    <isoform>
        <id>P84101-1</id>
        <name>1</name>
        <sequence type="displayed"/>
    </isoform>
    <isoform>
        <id>P84101-2</id>
        <name>2</name>
        <sequence type="described" ref="VSP_046732"/>
    </isoform>
    <isoform>
        <id>P84101-3</id>
        <name>3</name>
        <sequence type="described" ref="VSP_046731"/>
    </isoform>
    <isoform>
        <id>P84101-4</id>
        <name>4</name>
        <sequence type="described" ref="VSP_046730"/>
    </isoform>
</comment>
<comment type="similarity">
    <text evidence="3">Belongs to the SERF family.</text>
</comment>
<comment type="sequence caution" evidence="3">
    <conflict type="erroneous translation">
        <sequence resource="EMBL-CDS" id="AAK07636"/>
    </conflict>
    <text>Wrong choice of frame.</text>
</comment>
<protein>
    <recommendedName>
        <fullName>Small EDRK-rich factor 2</fullName>
    </recommendedName>
    <alternativeName>
        <fullName>Gastric cancer-related protein VRG107</fullName>
    </alternativeName>
    <alternativeName>
        <fullName>Protein 4F5-related</fullName>
        <shortName>4F5rel</shortName>
        <shortName>h4F5rel</shortName>
    </alternativeName>
</protein>
<keyword id="KW-0025">Alternative splicing</keyword>
<keyword id="KW-1267">Proteomics identification</keyword>
<keyword id="KW-1185">Reference proteome</keyword>
<proteinExistence type="evidence at protein level"/>
<feature type="chain" id="PRO_0000050712" description="Small EDRK-rich factor 2">
    <location>
        <begin position="1"/>
        <end position="59"/>
    </location>
</feature>
<feature type="region of interest" description="Disordered" evidence="1">
    <location>
        <begin position="1"/>
        <end position="59"/>
    </location>
</feature>
<feature type="compositionally biased region" description="Basic and acidic residues" evidence="1">
    <location>
        <begin position="1"/>
        <end position="30"/>
    </location>
</feature>
<feature type="compositionally biased region" description="Basic and acidic residues" evidence="1">
    <location>
        <begin position="50"/>
        <end position="59"/>
    </location>
</feature>
<feature type="splice variant" id="VSP_046730" description="In isoform 4." evidence="3">
    <location>
        <begin position="1"/>
        <end position="14"/>
    </location>
</feature>
<feature type="splice variant" id="VSP_046731" description="In isoform 3." evidence="3">
    <original>RDSEIMQQKQKKANEKKEEPK</original>
    <variation>SAPSSLPPGTRRSCSRSRKRQTRRRRNPSSFVASCPTLLPFACVPGASPTTLAFPPVVLTGPSTDGIPFALSLQRVPFVLPSPQVASLPLGHSRG</variation>
    <location>
        <begin position="39"/>
        <end position="59"/>
    </location>
</feature>
<feature type="splice variant" id="VSP_046732" description="In isoform 2." evidence="3">
    <original>DSEIMQQKQKKANEKKEEPK</original>
    <variation>VGVQQPNAELSPIHFHLILCALHPPASCPFCPLVPPSAPSSLPPGTRRSCSRSRKRQTRRRRNPSSFVASCPTLLPFACVPGASPTTLAFPPVVLTGPSTDGIPFALSLQRVPFVLPSPQVASLPLGHSRG</variation>
    <location>
        <begin position="40"/>
        <end position="59"/>
    </location>
</feature>
<feature type="sequence variant" id="VAR_051937" description="In dbSNP:rs11269.">
    <original>D</original>
    <variation>Y</variation>
    <location>
        <position position="40"/>
    </location>
</feature>
<reference key="1">
    <citation type="journal article" date="1998" name="Nat. Genet.">
        <title>Identification of a candidate modifying gene for spinal muscular atrophy by comparative genomics.</title>
        <authorList>
            <person name="Scharf J.M."/>
            <person name="Endrizzi M.G."/>
            <person name="Wetter A."/>
            <person name="Huang S."/>
            <person name="Thompson T.G."/>
            <person name="Zerres K."/>
            <person name="Dietrich W.F."/>
            <person name="Wirth B."/>
            <person name="Kunkel L.M."/>
        </authorList>
    </citation>
    <scope>NUCLEOTIDE SEQUENCE [MRNA] (ISOFORM 1)</scope>
</reference>
<reference key="2">
    <citation type="submission" date="2000-11" db="EMBL/GenBank/DDBJ databases">
        <authorList>
            <person name="Zhao Y."/>
            <person name="Han Y."/>
            <person name="You H."/>
            <person name="Shi Y."/>
            <person name="Wang X."/>
            <person name="Chen B."/>
            <person name="Qiao T."/>
            <person name="Wu K."/>
            <person name="Ding J."/>
            <person name="Fan D."/>
        </authorList>
    </citation>
    <scope>NUCLEOTIDE SEQUENCE [MRNA] (ISOFORM 1)</scope>
</reference>
<reference key="3">
    <citation type="journal article" date="2006" name="Nature">
        <title>Analysis of the DNA sequence and duplication history of human chromosome 15.</title>
        <authorList>
            <person name="Zody M.C."/>
            <person name="Garber M."/>
            <person name="Sharpe T."/>
            <person name="Young S.K."/>
            <person name="Rowen L."/>
            <person name="O'Neill K."/>
            <person name="Whittaker C.A."/>
            <person name="Kamal M."/>
            <person name="Chang J.L."/>
            <person name="Cuomo C.A."/>
            <person name="Dewar K."/>
            <person name="FitzGerald M.G."/>
            <person name="Kodira C.D."/>
            <person name="Madan A."/>
            <person name="Qin S."/>
            <person name="Yang X."/>
            <person name="Abbasi N."/>
            <person name="Abouelleil A."/>
            <person name="Arachchi H.M."/>
            <person name="Baradarani L."/>
            <person name="Birditt B."/>
            <person name="Bloom S."/>
            <person name="Bloom T."/>
            <person name="Borowsky M.L."/>
            <person name="Burke J."/>
            <person name="Butler J."/>
            <person name="Cook A."/>
            <person name="DeArellano K."/>
            <person name="DeCaprio D."/>
            <person name="Dorris L. III"/>
            <person name="Dors M."/>
            <person name="Eichler E.E."/>
            <person name="Engels R."/>
            <person name="Fahey J."/>
            <person name="Fleetwood P."/>
            <person name="Friedman C."/>
            <person name="Gearin G."/>
            <person name="Hall J.L."/>
            <person name="Hensley G."/>
            <person name="Johnson E."/>
            <person name="Jones C."/>
            <person name="Kamat A."/>
            <person name="Kaur A."/>
            <person name="Locke D.P."/>
            <person name="Madan A."/>
            <person name="Munson G."/>
            <person name="Jaffe D.B."/>
            <person name="Lui A."/>
            <person name="Macdonald P."/>
            <person name="Mauceli E."/>
            <person name="Naylor J.W."/>
            <person name="Nesbitt R."/>
            <person name="Nicol R."/>
            <person name="O'Leary S.B."/>
            <person name="Ratcliffe A."/>
            <person name="Rounsley S."/>
            <person name="She X."/>
            <person name="Sneddon K.M.B."/>
            <person name="Stewart S."/>
            <person name="Sougnez C."/>
            <person name="Stone S.M."/>
            <person name="Topham K."/>
            <person name="Vincent D."/>
            <person name="Wang S."/>
            <person name="Zimmer A.R."/>
            <person name="Birren B.W."/>
            <person name="Hood L."/>
            <person name="Lander E.S."/>
            <person name="Nusbaum C."/>
        </authorList>
    </citation>
    <scope>NUCLEOTIDE SEQUENCE [LARGE SCALE GENOMIC DNA]</scope>
</reference>
<reference key="4">
    <citation type="journal article" date="2004" name="Genome Res.">
        <title>The status, quality, and expansion of the NIH full-length cDNA project: the Mammalian Gene Collection (MGC).</title>
        <authorList>
            <consortium name="The MGC Project Team"/>
        </authorList>
    </citation>
    <scope>NUCLEOTIDE SEQUENCE [LARGE SCALE MRNA] (ISOFORM 1)</scope>
    <source>
        <tissue>Lung</tissue>
        <tissue>Pancreas</tissue>
    </source>
</reference>
<reference key="5">
    <citation type="journal article" date="2010" name="Cell">
        <title>Identification of MOAG-4/SERF as a regulator of age-related proteotoxicity.</title>
        <authorList>
            <person name="van Ham T.J."/>
            <person name="Holmberg M.A."/>
            <person name="van der Goot A.T."/>
            <person name="Teuling E."/>
            <person name="Garcia-Arencibia M."/>
            <person name="Kim H.E."/>
            <person name="Du D."/>
            <person name="Thijssen K.L."/>
            <person name="Wiersma M."/>
            <person name="Burggraaff R."/>
            <person name="van Bergeijk P."/>
            <person name="van Rheenen J."/>
            <person name="Jerre van Veluw G."/>
            <person name="Hofstra R.M."/>
            <person name="Rubinsztein D.C."/>
            <person name="Nollen E.A."/>
        </authorList>
    </citation>
    <scope>FUNCTION</scope>
</reference>
<reference key="6">
    <citation type="journal article" date="2011" name="BMC Syst. Biol.">
        <title>Initial characterization of the human central proteome.</title>
        <authorList>
            <person name="Burkard T.R."/>
            <person name="Planyavsky M."/>
            <person name="Kaupe I."/>
            <person name="Breitwieser F.P."/>
            <person name="Buerckstuemmer T."/>
            <person name="Bennett K.L."/>
            <person name="Superti-Furga G."/>
            <person name="Colinge J."/>
        </authorList>
    </citation>
    <scope>IDENTIFICATION BY MASS SPECTROMETRY [LARGE SCALE ANALYSIS]</scope>
</reference>
<sequence>MTRGNQRELARQKNMKKQSDSVKGKRRDDGLSAAARKQRDSEIMQQKQKKANEKKEEPK</sequence>
<evidence type="ECO:0000256" key="1">
    <source>
        <dbReference type="SAM" id="MobiDB-lite"/>
    </source>
</evidence>
<evidence type="ECO:0000269" key="2">
    <source>
    </source>
</evidence>
<evidence type="ECO:0000305" key="3"/>